<evidence type="ECO:0000250" key="1"/>
<evidence type="ECO:0000255" key="2">
    <source>
        <dbReference type="PROSITE-ProRule" id="PRU00193"/>
    </source>
</evidence>
<evidence type="ECO:0000305" key="3"/>
<name>NIFA_KLEPN</name>
<organism>
    <name type="scientific">Klebsiella pneumoniae</name>
    <dbReference type="NCBI Taxonomy" id="573"/>
    <lineage>
        <taxon>Bacteria</taxon>
        <taxon>Pseudomonadati</taxon>
        <taxon>Pseudomonadota</taxon>
        <taxon>Gammaproteobacteria</taxon>
        <taxon>Enterobacterales</taxon>
        <taxon>Enterobacteriaceae</taxon>
        <taxon>Klebsiella/Raoultella group</taxon>
        <taxon>Klebsiella</taxon>
        <taxon>Klebsiella pneumoniae complex</taxon>
    </lineage>
</organism>
<gene>
    <name type="primary">nifA</name>
</gene>
<accession>P03027</accession>
<protein>
    <recommendedName>
        <fullName>Nif-specific regulatory protein</fullName>
    </recommendedName>
</protein>
<proteinExistence type="evidence at protein level"/>
<keyword id="KW-0010">Activator</keyword>
<keyword id="KW-0067">ATP-binding</keyword>
<keyword id="KW-0238">DNA-binding</keyword>
<keyword id="KW-0535">Nitrogen fixation</keyword>
<keyword id="KW-0547">Nucleotide-binding</keyword>
<keyword id="KW-0804">Transcription</keyword>
<keyword id="KW-0805">Transcription regulation</keyword>
<keyword id="KW-0902">Two-component regulatory system</keyword>
<reference key="1">
    <citation type="journal article" date="1988" name="J. Mol. Biol.">
        <title>Nucleotide sequence of a 24,206-base-pair DNA fragment carrying the entire nitrogen fixation gene cluster of Klebsiella pneumoniae.</title>
        <authorList>
            <person name="Arnold W."/>
            <person name="Rump A."/>
            <person name="Klipp W."/>
            <person name="Priefer U.B."/>
            <person name="Puehler A."/>
        </authorList>
    </citation>
    <scope>NUCLEOTIDE SEQUENCE [GENOMIC DNA]</scope>
</reference>
<reference key="2">
    <citation type="journal article" date="1986" name="EMBO J.">
        <title>Sequence and domain relationships of ntrC and nifA from Klebsiella pneumoniae: homologies to other regulatory proteins.</title>
        <authorList>
            <person name="Drummond M."/>
            <person name="Whitty P."/>
            <person name="Wootton J."/>
        </authorList>
    </citation>
    <scope>NUCLEOTIDE SEQUENCE [GENOMIC DNA]</scope>
</reference>
<reference key="3">
    <citation type="journal article" date="1985" name="Nucleic Acids Res.">
        <title>Nitrogen fixation specific regulatory genes of Klebsiella pneumoniae and Rhizobium meliloti share homology with the general nitrogen regulatory gene ntrC of K. pneumoniae.</title>
        <authorList>
            <person name="Buikema W.J."/>
            <person name="Szeto W.W."/>
            <person name="Lemley P.V."/>
            <person name="Orme-Johnson W.H."/>
            <person name="Ausubel F.M."/>
        </authorList>
    </citation>
    <scope>NUCLEOTIDE SEQUENCE [GENOMIC DNA]</scope>
</reference>
<dbReference type="EMBL" id="X13303">
    <property type="protein sequence ID" value="CAA31682.1"/>
    <property type="molecule type" value="Genomic_DNA"/>
</dbReference>
<dbReference type="EMBL" id="X02616">
    <property type="protein sequence ID" value="CAA26472.1"/>
    <property type="status" value="ALT_FRAME"/>
    <property type="molecule type" value="Genomic_DNA"/>
</dbReference>
<dbReference type="EMBL" id="X03580">
    <property type="protein sequence ID" value="CAA27260.1"/>
    <property type="molecule type" value="Genomic_DNA"/>
</dbReference>
<dbReference type="PIR" id="A91060">
    <property type="entry name" value="RGKBAP"/>
</dbReference>
<dbReference type="SMR" id="P03027"/>
<dbReference type="IntAct" id="P03027">
    <property type="interactions" value="1"/>
</dbReference>
<dbReference type="MINT" id="P03027"/>
<dbReference type="GO" id="GO:0005524">
    <property type="term" value="F:ATP binding"/>
    <property type="evidence" value="ECO:0007669"/>
    <property type="project" value="UniProtKB-KW"/>
</dbReference>
<dbReference type="GO" id="GO:0016887">
    <property type="term" value="F:ATP hydrolysis activity"/>
    <property type="evidence" value="ECO:0007669"/>
    <property type="project" value="InterPro"/>
</dbReference>
<dbReference type="GO" id="GO:0003700">
    <property type="term" value="F:DNA-binding transcription factor activity"/>
    <property type="evidence" value="ECO:0007669"/>
    <property type="project" value="InterPro"/>
</dbReference>
<dbReference type="GO" id="GO:0043565">
    <property type="term" value="F:sequence-specific DNA binding"/>
    <property type="evidence" value="ECO:0007669"/>
    <property type="project" value="InterPro"/>
</dbReference>
<dbReference type="GO" id="GO:0009399">
    <property type="term" value="P:nitrogen fixation"/>
    <property type="evidence" value="ECO:0007669"/>
    <property type="project" value="UniProtKB-KW"/>
</dbReference>
<dbReference type="GO" id="GO:0000160">
    <property type="term" value="P:phosphorelay signal transduction system"/>
    <property type="evidence" value="ECO:0007669"/>
    <property type="project" value="UniProtKB-KW"/>
</dbReference>
<dbReference type="CDD" id="cd00009">
    <property type="entry name" value="AAA"/>
    <property type="match status" value="1"/>
</dbReference>
<dbReference type="FunFam" id="3.40.50.300:FF:000006">
    <property type="entry name" value="DNA-binding transcriptional regulator NtrC"/>
    <property type="match status" value="1"/>
</dbReference>
<dbReference type="Gene3D" id="1.10.8.60">
    <property type="match status" value="1"/>
</dbReference>
<dbReference type="Gene3D" id="3.30.450.40">
    <property type="match status" value="1"/>
</dbReference>
<dbReference type="Gene3D" id="1.10.10.60">
    <property type="entry name" value="Homeodomain-like"/>
    <property type="match status" value="1"/>
</dbReference>
<dbReference type="Gene3D" id="3.40.50.300">
    <property type="entry name" value="P-loop containing nucleotide triphosphate hydrolases"/>
    <property type="match status" value="1"/>
</dbReference>
<dbReference type="InterPro" id="IPR003593">
    <property type="entry name" value="AAA+_ATPase"/>
</dbReference>
<dbReference type="InterPro" id="IPR003018">
    <property type="entry name" value="GAF"/>
</dbReference>
<dbReference type="InterPro" id="IPR029016">
    <property type="entry name" value="GAF-like_dom_sf"/>
</dbReference>
<dbReference type="InterPro" id="IPR009057">
    <property type="entry name" value="Homeodomain-like_sf"/>
</dbReference>
<dbReference type="InterPro" id="IPR002197">
    <property type="entry name" value="HTH_Fis"/>
</dbReference>
<dbReference type="InterPro" id="IPR010113">
    <property type="entry name" value="Nif-specific_regulatory_prot"/>
</dbReference>
<dbReference type="InterPro" id="IPR027417">
    <property type="entry name" value="P-loop_NTPase"/>
</dbReference>
<dbReference type="InterPro" id="IPR002078">
    <property type="entry name" value="Sigma_54_int"/>
</dbReference>
<dbReference type="InterPro" id="IPR025662">
    <property type="entry name" value="Sigma_54_int_dom_ATP-bd_1"/>
</dbReference>
<dbReference type="InterPro" id="IPR025943">
    <property type="entry name" value="Sigma_54_int_dom_ATP-bd_2"/>
</dbReference>
<dbReference type="InterPro" id="IPR025944">
    <property type="entry name" value="Sigma_54_int_dom_CS"/>
</dbReference>
<dbReference type="NCBIfam" id="TIGR01817">
    <property type="entry name" value="nifA"/>
    <property type="match status" value="1"/>
</dbReference>
<dbReference type="PANTHER" id="PTHR32071:SF117">
    <property type="entry name" value="PTS-DEPENDENT DIHYDROXYACETONE KINASE OPERON REGULATORY PROTEIN-RELATED"/>
    <property type="match status" value="1"/>
</dbReference>
<dbReference type="PANTHER" id="PTHR32071">
    <property type="entry name" value="TRANSCRIPTIONAL REGULATORY PROTEIN"/>
    <property type="match status" value="1"/>
</dbReference>
<dbReference type="Pfam" id="PF01590">
    <property type="entry name" value="GAF"/>
    <property type="match status" value="1"/>
</dbReference>
<dbReference type="Pfam" id="PF02954">
    <property type="entry name" value="HTH_8"/>
    <property type="match status" value="1"/>
</dbReference>
<dbReference type="Pfam" id="PF00158">
    <property type="entry name" value="Sigma54_activat"/>
    <property type="match status" value="1"/>
</dbReference>
<dbReference type="PRINTS" id="PR01590">
    <property type="entry name" value="HTHFIS"/>
</dbReference>
<dbReference type="SMART" id="SM00382">
    <property type="entry name" value="AAA"/>
    <property type="match status" value="1"/>
</dbReference>
<dbReference type="SMART" id="SM00065">
    <property type="entry name" value="GAF"/>
    <property type="match status" value="1"/>
</dbReference>
<dbReference type="SUPFAM" id="SSF55781">
    <property type="entry name" value="GAF domain-like"/>
    <property type="match status" value="1"/>
</dbReference>
<dbReference type="SUPFAM" id="SSF46689">
    <property type="entry name" value="Homeodomain-like"/>
    <property type="match status" value="1"/>
</dbReference>
<dbReference type="SUPFAM" id="SSF52540">
    <property type="entry name" value="P-loop containing nucleoside triphosphate hydrolases"/>
    <property type="match status" value="1"/>
</dbReference>
<dbReference type="PROSITE" id="PS00675">
    <property type="entry name" value="SIGMA54_INTERACT_1"/>
    <property type="match status" value="1"/>
</dbReference>
<dbReference type="PROSITE" id="PS00676">
    <property type="entry name" value="SIGMA54_INTERACT_2"/>
    <property type="match status" value="1"/>
</dbReference>
<dbReference type="PROSITE" id="PS00688">
    <property type="entry name" value="SIGMA54_INTERACT_3"/>
    <property type="match status" value="1"/>
</dbReference>
<dbReference type="PROSITE" id="PS50045">
    <property type="entry name" value="SIGMA54_INTERACT_4"/>
    <property type="match status" value="1"/>
</dbReference>
<comment type="function">
    <text>Required for activation of most nif operons, which are directly involved in nitrogen fixation.</text>
</comment>
<comment type="subunit">
    <text>Interacts with sigma-54.</text>
</comment>
<comment type="interaction">
    <interactant intactId="EBI-8499916">
        <id>P03027</id>
    </interactant>
    <interactant intactId="EBI-8499900">
        <id>Q9ZA65</id>
        <label>glnK</label>
    </interactant>
    <organismsDiffer>false</organismsDiffer>
    <experiments>5</experiments>
</comment>
<comment type="sequence caution" evidence="3">
    <conflict type="frameshift">
        <sequence resource="EMBL-CDS" id="CAA26472"/>
    </conflict>
</comment>
<feature type="chain" id="PRO_0000081309" description="Nif-specific regulatory protein">
    <location>
        <begin position="1"/>
        <end position="524"/>
    </location>
</feature>
<feature type="domain" description="GAF">
    <location>
        <begin position="35"/>
        <end position="176"/>
    </location>
</feature>
<feature type="domain" description="Sigma-54 factor interaction" evidence="2">
    <location>
        <begin position="212"/>
        <end position="481"/>
    </location>
</feature>
<feature type="DNA-binding region" description="H-T-H motif" evidence="1">
    <location>
        <begin position="496"/>
        <end position="515"/>
    </location>
</feature>
<feature type="region of interest" description="A domain">
    <location>
        <begin position="1"/>
        <end position="182"/>
    </location>
</feature>
<feature type="region of interest" description="C-terminal DNA-binding domain">
    <location>
        <begin position="482"/>
        <end position="524"/>
    </location>
</feature>
<feature type="binding site" evidence="2">
    <location>
        <begin position="240"/>
        <end position="247"/>
    </location>
    <ligand>
        <name>ATP</name>
        <dbReference type="ChEBI" id="CHEBI:30616"/>
    </ligand>
</feature>
<feature type="binding site" evidence="2">
    <location>
        <begin position="303"/>
        <end position="312"/>
    </location>
    <ligand>
        <name>ATP</name>
        <dbReference type="ChEBI" id="CHEBI:30616"/>
    </ligand>
</feature>
<sequence length="524" mass="58632">MIHKSDSDTTVRRFDLSQQFTAMQRISVVLSRATEASKTLQEVLSVLHNDAFMQHGMICLYDSQQEILSIEALQQTEDQTLPGSTQIRYRPGEGLVGTVLAQGQSLVLPRVADDQRFLDRLSLYDYDLPFIAVPLMGPHSRPIGVLAAHAMARQEERLPACTRFLETVANLIAQTIRLMILPTSAAQAPQQSPRIERPRACTPSRGFGLENMVGKSPAMRQIMDIIRQVSRWDTTVLVRGESGTGKELIANAIHHNSPRAAAAFVKFNCAALPDNLLESELFGHEKGAFTGAVRQRKGRFELADGGTLFLDEIGESSASFQAKLLRILQEGEMERVGGDETLRVNVRIIAATNRHLEEEVRLGHFREDLYYRLNVMPIALPPLRERQEDIAELAHFLVRKIAHSQGRTLRISDGAIRLLMEYSWPGNVRELENCLERSAVLSESGLIDRDVILFNHRDNPPKALASSGPAEDGWLDNSLDERQRLIAALEKAGWVQAKAARLLGMTPRQVAYRIQIMDITMPRL</sequence>